<evidence type="ECO:0000255" key="1">
    <source>
        <dbReference type="HAMAP-Rule" id="MF_01454"/>
    </source>
</evidence>
<evidence type="ECO:0000255" key="2">
    <source>
        <dbReference type="PROSITE-ProRule" id="PRU01231"/>
    </source>
</evidence>
<evidence type="ECO:0000256" key="3">
    <source>
        <dbReference type="SAM" id="MobiDB-lite"/>
    </source>
</evidence>
<protein>
    <recommendedName>
        <fullName evidence="1">GTPase Obg</fullName>
        <ecNumber evidence="1">3.6.5.-</ecNumber>
    </recommendedName>
    <alternativeName>
        <fullName evidence="1">GTP-binding protein Obg</fullName>
    </alternativeName>
</protein>
<reference key="1">
    <citation type="journal article" date="2009" name="Proc. Natl. Acad. Sci. U.S.A.">
        <title>The genomic basis of trophic strategy in marine bacteria.</title>
        <authorList>
            <person name="Lauro F.M."/>
            <person name="McDougald D."/>
            <person name="Thomas T."/>
            <person name="Williams T.J."/>
            <person name="Egan S."/>
            <person name="Rice S."/>
            <person name="DeMaere M.Z."/>
            <person name="Ting L."/>
            <person name="Ertan H."/>
            <person name="Johnson J."/>
            <person name="Ferriera S."/>
            <person name="Lapidus A."/>
            <person name="Anderson I."/>
            <person name="Kyrpides N."/>
            <person name="Munk A.C."/>
            <person name="Detter C."/>
            <person name="Han C.S."/>
            <person name="Brown M.V."/>
            <person name="Robb F.T."/>
            <person name="Kjelleberg S."/>
            <person name="Cavicchioli R."/>
        </authorList>
    </citation>
    <scope>NUCLEOTIDE SEQUENCE [LARGE SCALE GENOMIC DNA]</scope>
    <source>
        <strain>DSM 13593 / LMG 18877 / RB2256</strain>
    </source>
</reference>
<feature type="chain" id="PRO_0000386267" description="GTPase Obg">
    <location>
        <begin position="1"/>
        <end position="348"/>
    </location>
</feature>
<feature type="domain" description="Obg" evidence="2">
    <location>
        <begin position="1"/>
        <end position="160"/>
    </location>
</feature>
<feature type="domain" description="OBG-type G" evidence="1">
    <location>
        <begin position="161"/>
        <end position="328"/>
    </location>
</feature>
<feature type="region of interest" description="Disordered" evidence="3">
    <location>
        <begin position="120"/>
        <end position="145"/>
    </location>
</feature>
<feature type="region of interest" description="Disordered" evidence="3">
    <location>
        <begin position="326"/>
        <end position="348"/>
    </location>
</feature>
<feature type="binding site" evidence="1">
    <location>
        <begin position="167"/>
        <end position="174"/>
    </location>
    <ligand>
        <name>GTP</name>
        <dbReference type="ChEBI" id="CHEBI:37565"/>
    </ligand>
</feature>
<feature type="binding site" evidence="1">
    <location>
        <position position="174"/>
    </location>
    <ligand>
        <name>Mg(2+)</name>
        <dbReference type="ChEBI" id="CHEBI:18420"/>
    </ligand>
</feature>
<feature type="binding site" evidence="1">
    <location>
        <begin position="192"/>
        <end position="196"/>
    </location>
    <ligand>
        <name>GTP</name>
        <dbReference type="ChEBI" id="CHEBI:37565"/>
    </ligand>
</feature>
<feature type="binding site" evidence="1">
    <location>
        <position position="194"/>
    </location>
    <ligand>
        <name>Mg(2+)</name>
        <dbReference type="ChEBI" id="CHEBI:18420"/>
    </ligand>
</feature>
<feature type="binding site" evidence="1">
    <location>
        <begin position="213"/>
        <end position="216"/>
    </location>
    <ligand>
        <name>GTP</name>
        <dbReference type="ChEBI" id="CHEBI:37565"/>
    </ligand>
</feature>
<feature type="binding site" evidence="1">
    <location>
        <begin position="280"/>
        <end position="283"/>
    </location>
    <ligand>
        <name>GTP</name>
        <dbReference type="ChEBI" id="CHEBI:37565"/>
    </ligand>
</feature>
<feature type="binding site" evidence="1">
    <location>
        <begin position="309"/>
        <end position="311"/>
    </location>
    <ligand>
        <name>GTP</name>
        <dbReference type="ChEBI" id="CHEBI:37565"/>
    </ligand>
</feature>
<organism>
    <name type="scientific">Sphingopyxis alaskensis (strain DSM 13593 / LMG 18877 / RB2256)</name>
    <name type="common">Sphingomonas alaskensis</name>
    <dbReference type="NCBI Taxonomy" id="317655"/>
    <lineage>
        <taxon>Bacteria</taxon>
        <taxon>Pseudomonadati</taxon>
        <taxon>Pseudomonadota</taxon>
        <taxon>Alphaproteobacteria</taxon>
        <taxon>Sphingomonadales</taxon>
        <taxon>Sphingomonadaceae</taxon>
        <taxon>Sphingopyxis</taxon>
    </lineage>
</organism>
<sequence>MHFLDQAKIFIKSGDGGPGAVSFRREKYIEYGGPDGGNGGKGGDIVFEAVAGLNTLIDFRYTQHFKAKRGTPGAGRDRTGAGGPDLVIQVPVGTQILADDEERTLLADLTKAGERVHFLRGGDGGRGNASYKTSTNRAPRQHGPGWPGEEMWVWLRLKLLADAGLVGLPNAGKSTFINAVTNAQAKVGAYAFTTLRPQLGVVSHKGHEFVIADIPGLIEGAAEGAGVGDRFLGHIERCRVLLHLVDANDADVATSYRVVRDELEAYGADLIDKPVIVALNKIDTLDDELIAALSAELEAESGHPVMALSGASGAGIEPVLDKLLEAIGQPEPGPDADEEEKGGDWSPI</sequence>
<comment type="function">
    <text evidence="1">An essential GTPase which binds GTP, GDP and possibly (p)ppGpp with moderate affinity, with high nucleotide exchange rates and a fairly low GTP hydrolysis rate. Plays a role in control of the cell cycle, stress response, ribosome biogenesis and in those bacteria that undergo differentiation, in morphogenesis control.</text>
</comment>
<comment type="cofactor">
    <cofactor evidence="1">
        <name>Mg(2+)</name>
        <dbReference type="ChEBI" id="CHEBI:18420"/>
    </cofactor>
</comment>
<comment type="subunit">
    <text evidence="1">Monomer.</text>
</comment>
<comment type="subcellular location">
    <subcellularLocation>
        <location evidence="1">Cytoplasm</location>
    </subcellularLocation>
</comment>
<comment type="similarity">
    <text evidence="1">Belongs to the TRAFAC class OBG-HflX-like GTPase superfamily. OBG GTPase family.</text>
</comment>
<keyword id="KW-0963">Cytoplasm</keyword>
<keyword id="KW-0342">GTP-binding</keyword>
<keyword id="KW-0378">Hydrolase</keyword>
<keyword id="KW-0460">Magnesium</keyword>
<keyword id="KW-0479">Metal-binding</keyword>
<keyword id="KW-0547">Nucleotide-binding</keyword>
<keyword id="KW-1185">Reference proteome</keyword>
<accession>Q1GSF4</accession>
<gene>
    <name evidence="1" type="primary">obg</name>
    <name type="ordered locus">Sala_1705</name>
</gene>
<name>OBG_SPHAL</name>
<proteinExistence type="inferred from homology"/>
<dbReference type="EC" id="3.6.5.-" evidence="1"/>
<dbReference type="EMBL" id="CP000356">
    <property type="protein sequence ID" value="ABF53418.1"/>
    <property type="molecule type" value="Genomic_DNA"/>
</dbReference>
<dbReference type="RefSeq" id="WP_011541998.1">
    <property type="nucleotide sequence ID" value="NC_008048.1"/>
</dbReference>
<dbReference type="SMR" id="Q1GSF4"/>
<dbReference type="STRING" id="317655.Sala_1705"/>
<dbReference type="KEGG" id="sal:Sala_1705"/>
<dbReference type="eggNOG" id="COG0536">
    <property type="taxonomic scope" value="Bacteria"/>
</dbReference>
<dbReference type="HOGENOM" id="CLU_011747_2_0_5"/>
<dbReference type="OrthoDB" id="9807318at2"/>
<dbReference type="Proteomes" id="UP000006578">
    <property type="component" value="Chromosome"/>
</dbReference>
<dbReference type="GO" id="GO:0005737">
    <property type="term" value="C:cytoplasm"/>
    <property type="evidence" value="ECO:0007669"/>
    <property type="project" value="UniProtKB-SubCell"/>
</dbReference>
<dbReference type="GO" id="GO:0005525">
    <property type="term" value="F:GTP binding"/>
    <property type="evidence" value="ECO:0007669"/>
    <property type="project" value="UniProtKB-UniRule"/>
</dbReference>
<dbReference type="GO" id="GO:0003924">
    <property type="term" value="F:GTPase activity"/>
    <property type="evidence" value="ECO:0007669"/>
    <property type="project" value="UniProtKB-UniRule"/>
</dbReference>
<dbReference type="GO" id="GO:0000287">
    <property type="term" value="F:magnesium ion binding"/>
    <property type="evidence" value="ECO:0007669"/>
    <property type="project" value="InterPro"/>
</dbReference>
<dbReference type="GO" id="GO:0042254">
    <property type="term" value="P:ribosome biogenesis"/>
    <property type="evidence" value="ECO:0007669"/>
    <property type="project" value="UniProtKB-UniRule"/>
</dbReference>
<dbReference type="CDD" id="cd01898">
    <property type="entry name" value="Obg"/>
    <property type="match status" value="1"/>
</dbReference>
<dbReference type="FunFam" id="2.70.210.12:FF:000001">
    <property type="entry name" value="GTPase Obg"/>
    <property type="match status" value="1"/>
</dbReference>
<dbReference type="Gene3D" id="2.70.210.12">
    <property type="entry name" value="GTP1/OBG domain"/>
    <property type="match status" value="1"/>
</dbReference>
<dbReference type="Gene3D" id="3.40.50.300">
    <property type="entry name" value="P-loop containing nucleotide triphosphate hydrolases"/>
    <property type="match status" value="1"/>
</dbReference>
<dbReference type="HAMAP" id="MF_01454">
    <property type="entry name" value="GTPase_Obg"/>
    <property type="match status" value="1"/>
</dbReference>
<dbReference type="InterPro" id="IPR031167">
    <property type="entry name" value="G_OBG"/>
</dbReference>
<dbReference type="InterPro" id="IPR006073">
    <property type="entry name" value="GTP-bd"/>
</dbReference>
<dbReference type="InterPro" id="IPR014100">
    <property type="entry name" value="GTP-bd_Obg/CgtA"/>
</dbReference>
<dbReference type="InterPro" id="IPR006074">
    <property type="entry name" value="GTP1-OBG_CS"/>
</dbReference>
<dbReference type="InterPro" id="IPR006169">
    <property type="entry name" value="GTP1_OBG_dom"/>
</dbReference>
<dbReference type="InterPro" id="IPR036726">
    <property type="entry name" value="GTP1_OBG_dom_sf"/>
</dbReference>
<dbReference type="InterPro" id="IPR045086">
    <property type="entry name" value="OBG_GTPase"/>
</dbReference>
<dbReference type="InterPro" id="IPR027417">
    <property type="entry name" value="P-loop_NTPase"/>
</dbReference>
<dbReference type="InterPro" id="IPR005225">
    <property type="entry name" value="Small_GTP-bd"/>
</dbReference>
<dbReference type="NCBIfam" id="TIGR02729">
    <property type="entry name" value="Obg_CgtA"/>
    <property type="match status" value="1"/>
</dbReference>
<dbReference type="NCBIfam" id="NF008955">
    <property type="entry name" value="PRK12297.1"/>
    <property type="match status" value="1"/>
</dbReference>
<dbReference type="NCBIfam" id="NF008956">
    <property type="entry name" value="PRK12299.1"/>
    <property type="match status" value="1"/>
</dbReference>
<dbReference type="NCBIfam" id="TIGR00231">
    <property type="entry name" value="small_GTP"/>
    <property type="match status" value="1"/>
</dbReference>
<dbReference type="PANTHER" id="PTHR11702">
    <property type="entry name" value="DEVELOPMENTALLY REGULATED GTP-BINDING PROTEIN-RELATED"/>
    <property type="match status" value="1"/>
</dbReference>
<dbReference type="PANTHER" id="PTHR11702:SF31">
    <property type="entry name" value="MITOCHONDRIAL RIBOSOME-ASSOCIATED GTPASE 2"/>
    <property type="match status" value="1"/>
</dbReference>
<dbReference type="Pfam" id="PF01018">
    <property type="entry name" value="GTP1_OBG"/>
    <property type="match status" value="1"/>
</dbReference>
<dbReference type="Pfam" id="PF01926">
    <property type="entry name" value="MMR_HSR1"/>
    <property type="match status" value="1"/>
</dbReference>
<dbReference type="PIRSF" id="PIRSF002401">
    <property type="entry name" value="GTP_bd_Obg/CgtA"/>
    <property type="match status" value="1"/>
</dbReference>
<dbReference type="PRINTS" id="PR00326">
    <property type="entry name" value="GTP1OBG"/>
</dbReference>
<dbReference type="SUPFAM" id="SSF82051">
    <property type="entry name" value="Obg GTP-binding protein N-terminal domain"/>
    <property type="match status" value="1"/>
</dbReference>
<dbReference type="SUPFAM" id="SSF52540">
    <property type="entry name" value="P-loop containing nucleoside triphosphate hydrolases"/>
    <property type="match status" value="1"/>
</dbReference>
<dbReference type="PROSITE" id="PS51710">
    <property type="entry name" value="G_OBG"/>
    <property type="match status" value="1"/>
</dbReference>
<dbReference type="PROSITE" id="PS00905">
    <property type="entry name" value="GTP1_OBG"/>
    <property type="match status" value="1"/>
</dbReference>
<dbReference type="PROSITE" id="PS51883">
    <property type="entry name" value="OBG"/>
    <property type="match status" value="1"/>
</dbReference>